<name>BPT_PARL1</name>
<organism>
    <name type="scientific">Parvibaculum lavamentivorans (strain DS-1 / DSM 13023 / NCIMB 13966)</name>
    <dbReference type="NCBI Taxonomy" id="402881"/>
    <lineage>
        <taxon>Bacteria</taxon>
        <taxon>Pseudomonadati</taxon>
        <taxon>Pseudomonadota</taxon>
        <taxon>Alphaproteobacteria</taxon>
        <taxon>Hyphomicrobiales</taxon>
        <taxon>Parvibaculaceae</taxon>
        <taxon>Parvibaculum</taxon>
    </lineage>
</organism>
<proteinExistence type="inferred from homology"/>
<accession>A7HX57</accession>
<gene>
    <name evidence="1" type="primary">bpt</name>
    <name type="ordered locus">Plav_2883</name>
</gene>
<evidence type="ECO:0000255" key="1">
    <source>
        <dbReference type="HAMAP-Rule" id="MF_00689"/>
    </source>
</evidence>
<feature type="chain" id="PRO_1000072742" description="Aspartate/glutamate leucyltransferase">
    <location>
        <begin position="1"/>
        <end position="241"/>
    </location>
</feature>
<dbReference type="EC" id="2.3.2.29" evidence="1"/>
<dbReference type="EMBL" id="CP000774">
    <property type="protein sequence ID" value="ABS64490.1"/>
    <property type="molecule type" value="Genomic_DNA"/>
</dbReference>
<dbReference type="RefSeq" id="WP_012111806.1">
    <property type="nucleotide sequence ID" value="NC_009719.1"/>
</dbReference>
<dbReference type="SMR" id="A7HX57"/>
<dbReference type="STRING" id="402881.Plav_2883"/>
<dbReference type="KEGG" id="pla:Plav_2883"/>
<dbReference type="eggNOG" id="COG2935">
    <property type="taxonomic scope" value="Bacteria"/>
</dbReference>
<dbReference type="HOGENOM" id="CLU_077607_1_0_5"/>
<dbReference type="OrthoDB" id="9782022at2"/>
<dbReference type="Proteomes" id="UP000006377">
    <property type="component" value="Chromosome"/>
</dbReference>
<dbReference type="GO" id="GO:0005737">
    <property type="term" value="C:cytoplasm"/>
    <property type="evidence" value="ECO:0007669"/>
    <property type="project" value="UniProtKB-SubCell"/>
</dbReference>
<dbReference type="GO" id="GO:0004057">
    <property type="term" value="F:arginyl-tRNA--protein transferase activity"/>
    <property type="evidence" value="ECO:0007669"/>
    <property type="project" value="InterPro"/>
</dbReference>
<dbReference type="GO" id="GO:0008914">
    <property type="term" value="F:leucyl-tRNA--protein transferase activity"/>
    <property type="evidence" value="ECO:0007669"/>
    <property type="project" value="UniProtKB-UniRule"/>
</dbReference>
<dbReference type="GO" id="GO:0071596">
    <property type="term" value="P:ubiquitin-dependent protein catabolic process via the N-end rule pathway"/>
    <property type="evidence" value="ECO:0007669"/>
    <property type="project" value="InterPro"/>
</dbReference>
<dbReference type="HAMAP" id="MF_00689">
    <property type="entry name" value="Bpt"/>
    <property type="match status" value="1"/>
</dbReference>
<dbReference type="InterPro" id="IPR016181">
    <property type="entry name" value="Acyl_CoA_acyltransferase"/>
</dbReference>
<dbReference type="InterPro" id="IPR017138">
    <property type="entry name" value="Asp_Glu_LeuTrfase"/>
</dbReference>
<dbReference type="InterPro" id="IPR030700">
    <property type="entry name" value="N-end_Aminoacyl_Trfase"/>
</dbReference>
<dbReference type="InterPro" id="IPR007472">
    <property type="entry name" value="N-end_Aminoacyl_Trfase_C"/>
</dbReference>
<dbReference type="InterPro" id="IPR007471">
    <property type="entry name" value="N-end_Aminoacyl_Trfase_N"/>
</dbReference>
<dbReference type="NCBIfam" id="NF002341">
    <property type="entry name" value="PRK01305.1-1"/>
    <property type="match status" value="1"/>
</dbReference>
<dbReference type="NCBIfam" id="NF002342">
    <property type="entry name" value="PRK01305.1-3"/>
    <property type="match status" value="1"/>
</dbReference>
<dbReference type="NCBIfam" id="NF002343">
    <property type="entry name" value="PRK01305.1-4"/>
    <property type="match status" value="1"/>
</dbReference>
<dbReference type="NCBIfam" id="NF002346">
    <property type="entry name" value="PRK01305.2-3"/>
    <property type="match status" value="1"/>
</dbReference>
<dbReference type="PANTHER" id="PTHR21367">
    <property type="entry name" value="ARGININE-TRNA-PROTEIN TRANSFERASE 1"/>
    <property type="match status" value="1"/>
</dbReference>
<dbReference type="PANTHER" id="PTHR21367:SF1">
    <property type="entry name" value="ARGINYL-TRNA--PROTEIN TRANSFERASE 1"/>
    <property type="match status" value="1"/>
</dbReference>
<dbReference type="Pfam" id="PF04377">
    <property type="entry name" value="ATE_C"/>
    <property type="match status" value="1"/>
</dbReference>
<dbReference type="Pfam" id="PF04376">
    <property type="entry name" value="ATE_N"/>
    <property type="match status" value="1"/>
</dbReference>
<dbReference type="PIRSF" id="PIRSF037208">
    <property type="entry name" value="ATE_pro_prd"/>
    <property type="match status" value="1"/>
</dbReference>
<dbReference type="SUPFAM" id="SSF55729">
    <property type="entry name" value="Acyl-CoA N-acyltransferases (Nat)"/>
    <property type="match status" value="1"/>
</dbReference>
<reference key="1">
    <citation type="journal article" date="2011" name="Stand. Genomic Sci.">
        <title>Complete genome sequence of Parvibaculum lavamentivorans type strain (DS-1(T)).</title>
        <authorList>
            <person name="Schleheck D."/>
            <person name="Weiss M."/>
            <person name="Pitluck S."/>
            <person name="Bruce D."/>
            <person name="Land M.L."/>
            <person name="Han S."/>
            <person name="Saunders E."/>
            <person name="Tapia R."/>
            <person name="Detter C."/>
            <person name="Brettin T."/>
            <person name="Han J."/>
            <person name="Woyke T."/>
            <person name="Goodwin L."/>
            <person name="Pennacchio L."/>
            <person name="Nolan M."/>
            <person name="Cook A.M."/>
            <person name="Kjelleberg S."/>
            <person name="Thomas T."/>
        </authorList>
    </citation>
    <scope>NUCLEOTIDE SEQUENCE [LARGE SCALE GENOMIC DNA]</scope>
    <source>
        <strain>DS-1 / DSM 13023 / NCIMB 13966</strain>
    </source>
</reference>
<protein>
    <recommendedName>
        <fullName evidence="1">Aspartate/glutamate leucyltransferase</fullName>
        <ecNumber evidence="1">2.3.2.29</ecNumber>
    </recommendedName>
</protein>
<sequence>MTDQSRTRFPQFYITAPQPCPYLLGRYEKKVFTHLLGDEPVSLNNALTQAGFRRSQNIAYRPACDDCQACVSVRVVVKDFQPGRTFRRILARNADLRSTPQPARATDEQYTLLRRYLDARHAEGGMADMSRLDYVAMVEDTTIATRLFEYRRPDGTLTAAALTDMLDDGLSMVYSFYEPGEPGRSLGTWMVLEHIERARALSLPYVYLGYWVDGSRKMAYKTRFRPLEALTMEGWRAHPAS</sequence>
<keyword id="KW-0012">Acyltransferase</keyword>
<keyword id="KW-0963">Cytoplasm</keyword>
<keyword id="KW-1185">Reference proteome</keyword>
<keyword id="KW-0808">Transferase</keyword>
<comment type="function">
    <text evidence="1">Functions in the N-end rule pathway of protein degradation where it conjugates Leu from its aminoacyl-tRNA to the N-termini of proteins containing an N-terminal aspartate or glutamate.</text>
</comment>
<comment type="catalytic activity">
    <reaction evidence="1">
        <text>N-terminal L-glutamyl-[protein] + L-leucyl-tRNA(Leu) = N-terminal L-leucyl-L-glutamyl-[protein] + tRNA(Leu) + H(+)</text>
        <dbReference type="Rhea" id="RHEA:50412"/>
        <dbReference type="Rhea" id="RHEA-COMP:9613"/>
        <dbReference type="Rhea" id="RHEA-COMP:9622"/>
        <dbReference type="Rhea" id="RHEA-COMP:12664"/>
        <dbReference type="Rhea" id="RHEA-COMP:12668"/>
        <dbReference type="ChEBI" id="CHEBI:15378"/>
        <dbReference type="ChEBI" id="CHEBI:64721"/>
        <dbReference type="ChEBI" id="CHEBI:78442"/>
        <dbReference type="ChEBI" id="CHEBI:78494"/>
        <dbReference type="ChEBI" id="CHEBI:133041"/>
        <dbReference type="EC" id="2.3.2.29"/>
    </reaction>
</comment>
<comment type="catalytic activity">
    <reaction evidence="1">
        <text>N-terminal L-aspartyl-[protein] + L-leucyl-tRNA(Leu) = N-terminal L-leucyl-L-aspartyl-[protein] + tRNA(Leu) + H(+)</text>
        <dbReference type="Rhea" id="RHEA:50420"/>
        <dbReference type="Rhea" id="RHEA-COMP:9613"/>
        <dbReference type="Rhea" id="RHEA-COMP:9622"/>
        <dbReference type="Rhea" id="RHEA-COMP:12669"/>
        <dbReference type="Rhea" id="RHEA-COMP:12674"/>
        <dbReference type="ChEBI" id="CHEBI:15378"/>
        <dbReference type="ChEBI" id="CHEBI:64720"/>
        <dbReference type="ChEBI" id="CHEBI:78442"/>
        <dbReference type="ChEBI" id="CHEBI:78494"/>
        <dbReference type="ChEBI" id="CHEBI:133042"/>
        <dbReference type="EC" id="2.3.2.29"/>
    </reaction>
</comment>
<comment type="subcellular location">
    <subcellularLocation>
        <location evidence="1">Cytoplasm</location>
    </subcellularLocation>
</comment>
<comment type="similarity">
    <text evidence="1">Belongs to the R-transferase family. Bpt subfamily.</text>
</comment>